<name>ATPF_BUXMI</name>
<sequence>MKNVTDSFVSLVNWPSAGSFGFNTDILATNPINLSVVLGVLIFFGKGVLSDLLDNRKQRILSTIRNSEELRVGAIEQLEKARARLRKVEMEADEFRVNGYSEIEREKLNLINSTYKNLERLENYKNETIHFEQQRAINQVRQRVFQQALQGALGTLNSCLNNELHLRTISANIGMFGAMKEITD</sequence>
<proteinExistence type="inferred from homology"/>
<feature type="chain" id="PRO_0000368910" description="ATP synthase subunit b, chloroplastic">
    <location>
        <begin position="1"/>
        <end position="184"/>
    </location>
</feature>
<feature type="transmembrane region" description="Helical" evidence="1">
    <location>
        <begin position="27"/>
        <end position="49"/>
    </location>
</feature>
<gene>
    <name evidence="1" type="primary">atpF</name>
</gene>
<accession>A6MM22</accession>
<organism>
    <name type="scientific">Buxus microphylla</name>
    <name type="common">Littleleaf boxwood</name>
    <name type="synonym">Japanese boxwood</name>
    <dbReference type="NCBI Taxonomy" id="153571"/>
    <lineage>
        <taxon>Eukaryota</taxon>
        <taxon>Viridiplantae</taxon>
        <taxon>Streptophyta</taxon>
        <taxon>Embryophyta</taxon>
        <taxon>Tracheophyta</taxon>
        <taxon>Spermatophyta</taxon>
        <taxon>Magnoliopsida</taxon>
        <taxon>Buxales</taxon>
        <taxon>Buxaceae</taxon>
        <taxon>Buxus</taxon>
    </lineage>
</organism>
<evidence type="ECO:0000255" key="1">
    <source>
        <dbReference type="HAMAP-Rule" id="MF_01398"/>
    </source>
</evidence>
<protein>
    <recommendedName>
        <fullName evidence="1">ATP synthase subunit b, chloroplastic</fullName>
    </recommendedName>
    <alternativeName>
        <fullName evidence="1">ATP synthase F(0) sector subunit b</fullName>
    </alternativeName>
    <alternativeName>
        <fullName evidence="1">ATPase subunit I</fullName>
    </alternativeName>
</protein>
<keyword id="KW-0066">ATP synthesis</keyword>
<keyword id="KW-0138">CF(0)</keyword>
<keyword id="KW-0150">Chloroplast</keyword>
<keyword id="KW-0375">Hydrogen ion transport</keyword>
<keyword id="KW-0406">Ion transport</keyword>
<keyword id="KW-0472">Membrane</keyword>
<keyword id="KW-0934">Plastid</keyword>
<keyword id="KW-0793">Thylakoid</keyword>
<keyword id="KW-0812">Transmembrane</keyword>
<keyword id="KW-1133">Transmembrane helix</keyword>
<keyword id="KW-0813">Transport</keyword>
<comment type="function">
    <text evidence="1">F(1)F(0) ATP synthase produces ATP from ADP in the presence of a proton or sodium gradient. F-type ATPases consist of two structural domains, F(1) containing the extramembraneous catalytic core and F(0) containing the membrane proton channel, linked together by a central stalk and a peripheral stalk. During catalysis, ATP synthesis in the catalytic domain of F(1) is coupled via a rotary mechanism of the central stalk subunits to proton translocation.</text>
</comment>
<comment type="function">
    <text evidence="1">Component of the F(0) channel, it forms part of the peripheral stalk, linking F(1) to F(0).</text>
</comment>
<comment type="subunit">
    <text evidence="1">F-type ATPases have 2 components, F(1) - the catalytic core - and F(0) - the membrane proton channel. F(1) has five subunits: alpha(3), beta(3), gamma(1), delta(1), epsilon(1). F(0) has four main subunits: a(1), b(1), b'(1) and c(10-14). The alpha and beta chains form an alternating ring which encloses part of the gamma chain. F(1) is attached to F(0) by a central stalk formed by the gamma and epsilon chains, while a peripheral stalk is formed by the delta, b and b' chains.</text>
</comment>
<comment type="subcellular location">
    <subcellularLocation>
        <location evidence="1">Plastid</location>
        <location evidence="1">Chloroplast thylakoid membrane</location>
        <topology evidence="1">Single-pass membrane protein</topology>
    </subcellularLocation>
</comment>
<comment type="miscellaneous">
    <text>In plastids the F-type ATPase is also known as CF(1)CF(0).</text>
</comment>
<comment type="similarity">
    <text evidence="1">Belongs to the ATPase B chain family.</text>
</comment>
<dbReference type="EMBL" id="EF380351">
    <property type="protein sequence ID" value="ABQ45235.1"/>
    <property type="molecule type" value="Genomic_DNA"/>
</dbReference>
<dbReference type="RefSeq" id="YP_001294170.1">
    <property type="nucleotide sequence ID" value="NC_009599.1"/>
</dbReference>
<dbReference type="SMR" id="A6MM22"/>
<dbReference type="GeneID" id="5236957"/>
<dbReference type="GO" id="GO:0009535">
    <property type="term" value="C:chloroplast thylakoid membrane"/>
    <property type="evidence" value="ECO:0007669"/>
    <property type="project" value="UniProtKB-SubCell"/>
</dbReference>
<dbReference type="GO" id="GO:0045259">
    <property type="term" value="C:proton-transporting ATP synthase complex"/>
    <property type="evidence" value="ECO:0007669"/>
    <property type="project" value="UniProtKB-KW"/>
</dbReference>
<dbReference type="GO" id="GO:0046933">
    <property type="term" value="F:proton-transporting ATP synthase activity, rotational mechanism"/>
    <property type="evidence" value="ECO:0007669"/>
    <property type="project" value="UniProtKB-UniRule"/>
</dbReference>
<dbReference type="CDD" id="cd06503">
    <property type="entry name" value="ATP-synt_Fo_b"/>
    <property type="match status" value="1"/>
</dbReference>
<dbReference type="HAMAP" id="MF_01398">
    <property type="entry name" value="ATP_synth_b_bprime"/>
    <property type="match status" value="1"/>
</dbReference>
<dbReference type="InterPro" id="IPR002146">
    <property type="entry name" value="ATP_synth_b/b'su_bac/chlpt"/>
</dbReference>
<dbReference type="PANTHER" id="PTHR34264">
    <property type="entry name" value="ATP SYNTHASE SUBUNIT B, CHLOROPLASTIC"/>
    <property type="match status" value="1"/>
</dbReference>
<dbReference type="PANTHER" id="PTHR34264:SF3">
    <property type="entry name" value="ATP SYNTHASE SUBUNIT B, CHLOROPLASTIC"/>
    <property type="match status" value="1"/>
</dbReference>
<dbReference type="Pfam" id="PF00430">
    <property type="entry name" value="ATP-synt_B"/>
    <property type="match status" value="1"/>
</dbReference>
<geneLocation type="chloroplast"/>
<reference key="1">
    <citation type="journal article" date="2007" name="Mol. Phylogenet. Evol.">
        <title>Phylogenetic and evolutionary implications of complete chloroplast genome sequences of four early-diverging angiosperms: Buxus (Buxaceae), Chloranthus (Chloranthaceae), Dioscorea (Dioscoreaceae), and Illicium (Schisandraceae).</title>
        <authorList>
            <person name="Hansen D.R."/>
            <person name="Dastidar S.G."/>
            <person name="Cai Z."/>
            <person name="Penaflor C."/>
            <person name="Kuehl J.V."/>
            <person name="Boore J.L."/>
            <person name="Jansen R.K."/>
        </authorList>
    </citation>
    <scope>NUCLEOTIDE SEQUENCE [LARGE SCALE GENOMIC DNA]</scope>
</reference>